<feature type="chain" id="PRO_0000380909" description="Putative 8-amino-7-oxononanoate synthase">
    <location>
        <begin position="1"/>
        <end position="395"/>
    </location>
</feature>
<feature type="binding site" evidence="1">
    <location>
        <position position="23"/>
    </location>
    <ligand>
        <name>substrate</name>
    </ligand>
</feature>
<feature type="binding site" evidence="1">
    <location>
        <begin position="110"/>
        <end position="111"/>
    </location>
    <ligand>
        <name>pyridoxal 5'-phosphate</name>
        <dbReference type="ChEBI" id="CHEBI:597326"/>
    </ligand>
</feature>
<feature type="binding site" evidence="1">
    <location>
        <position position="135"/>
    </location>
    <ligand>
        <name>substrate</name>
    </ligand>
</feature>
<feature type="binding site" evidence="1">
    <location>
        <position position="182"/>
    </location>
    <ligand>
        <name>pyridoxal 5'-phosphate</name>
        <dbReference type="ChEBI" id="CHEBI:597326"/>
    </ligand>
</feature>
<feature type="binding site" evidence="1">
    <location>
        <begin position="207"/>
        <end position="210"/>
    </location>
    <ligand>
        <name>pyridoxal 5'-phosphate</name>
        <dbReference type="ChEBI" id="CHEBI:597326"/>
    </ligand>
</feature>
<feature type="binding site" evidence="1">
    <location>
        <begin position="239"/>
        <end position="242"/>
    </location>
    <ligand>
        <name>pyridoxal 5'-phosphate</name>
        <dbReference type="ChEBI" id="CHEBI:597326"/>
    </ligand>
</feature>
<feature type="binding site" evidence="1">
    <location>
        <position position="356"/>
    </location>
    <ligand>
        <name>substrate</name>
    </ligand>
</feature>
<feature type="modified residue" description="N6-(pyridoxal phosphate)lysine" evidence="1">
    <location>
        <position position="242"/>
    </location>
</feature>
<gene>
    <name type="primary">bioF</name>
    <name type="ordered locus">BCG9842_B1009</name>
</gene>
<accession>B7IWN1</accession>
<dbReference type="EC" id="2.3.1.47"/>
<dbReference type="EMBL" id="CP001186">
    <property type="protein sequence ID" value="ACK94181.1"/>
    <property type="molecule type" value="Genomic_DNA"/>
</dbReference>
<dbReference type="RefSeq" id="WP_001077300.1">
    <property type="nucleotide sequence ID" value="NC_011772.1"/>
</dbReference>
<dbReference type="SMR" id="B7IWN1"/>
<dbReference type="KEGG" id="bcg:BCG9842_B1009"/>
<dbReference type="HOGENOM" id="CLU_015846_11_2_9"/>
<dbReference type="UniPathway" id="UPA00078"/>
<dbReference type="Proteomes" id="UP000006744">
    <property type="component" value="Chromosome"/>
</dbReference>
<dbReference type="GO" id="GO:0008710">
    <property type="term" value="F:8-amino-7-oxononanoate synthase activity"/>
    <property type="evidence" value="ECO:0007669"/>
    <property type="project" value="UniProtKB-EC"/>
</dbReference>
<dbReference type="GO" id="GO:0030170">
    <property type="term" value="F:pyridoxal phosphate binding"/>
    <property type="evidence" value="ECO:0007669"/>
    <property type="project" value="InterPro"/>
</dbReference>
<dbReference type="GO" id="GO:0009102">
    <property type="term" value="P:biotin biosynthetic process"/>
    <property type="evidence" value="ECO:0007669"/>
    <property type="project" value="UniProtKB-UniPathway"/>
</dbReference>
<dbReference type="CDD" id="cd06454">
    <property type="entry name" value="KBL_like"/>
    <property type="match status" value="1"/>
</dbReference>
<dbReference type="FunFam" id="3.40.640.10:FF:000006">
    <property type="entry name" value="5-aminolevulinate synthase, mitochondrial"/>
    <property type="match status" value="1"/>
</dbReference>
<dbReference type="Gene3D" id="3.90.1150.10">
    <property type="entry name" value="Aspartate Aminotransferase, domain 1"/>
    <property type="match status" value="1"/>
</dbReference>
<dbReference type="Gene3D" id="3.40.640.10">
    <property type="entry name" value="Type I PLP-dependent aspartate aminotransferase-like (Major domain)"/>
    <property type="match status" value="1"/>
</dbReference>
<dbReference type="InterPro" id="IPR001917">
    <property type="entry name" value="Aminotrans_II_pyridoxalP_BS"/>
</dbReference>
<dbReference type="InterPro" id="IPR004839">
    <property type="entry name" value="Aminotransferase_I/II_large"/>
</dbReference>
<dbReference type="InterPro" id="IPR050087">
    <property type="entry name" value="AON_synthase_class-II"/>
</dbReference>
<dbReference type="InterPro" id="IPR004723">
    <property type="entry name" value="AONS_Archaea/Proteobacteria"/>
</dbReference>
<dbReference type="InterPro" id="IPR015424">
    <property type="entry name" value="PyrdxlP-dep_Trfase"/>
</dbReference>
<dbReference type="InterPro" id="IPR015421">
    <property type="entry name" value="PyrdxlP-dep_Trfase_major"/>
</dbReference>
<dbReference type="InterPro" id="IPR015422">
    <property type="entry name" value="PyrdxlP-dep_Trfase_small"/>
</dbReference>
<dbReference type="NCBIfam" id="TIGR00858">
    <property type="entry name" value="bioF"/>
    <property type="match status" value="1"/>
</dbReference>
<dbReference type="PANTHER" id="PTHR13693:SF100">
    <property type="entry name" value="8-AMINO-7-OXONONANOATE SYNTHASE"/>
    <property type="match status" value="1"/>
</dbReference>
<dbReference type="PANTHER" id="PTHR13693">
    <property type="entry name" value="CLASS II AMINOTRANSFERASE/8-AMINO-7-OXONONANOATE SYNTHASE"/>
    <property type="match status" value="1"/>
</dbReference>
<dbReference type="Pfam" id="PF00155">
    <property type="entry name" value="Aminotran_1_2"/>
    <property type="match status" value="1"/>
</dbReference>
<dbReference type="SUPFAM" id="SSF53383">
    <property type="entry name" value="PLP-dependent transferases"/>
    <property type="match status" value="1"/>
</dbReference>
<dbReference type="PROSITE" id="PS00599">
    <property type="entry name" value="AA_TRANSFER_CLASS_2"/>
    <property type="match status" value="1"/>
</dbReference>
<name>BIOF_BACC2</name>
<evidence type="ECO:0000250" key="1"/>
<evidence type="ECO:0000305" key="2"/>
<organism>
    <name type="scientific">Bacillus cereus (strain G9842)</name>
    <dbReference type="NCBI Taxonomy" id="405531"/>
    <lineage>
        <taxon>Bacteria</taxon>
        <taxon>Bacillati</taxon>
        <taxon>Bacillota</taxon>
        <taxon>Bacilli</taxon>
        <taxon>Bacillales</taxon>
        <taxon>Bacillaceae</taxon>
        <taxon>Bacillus</taxon>
        <taxon>Bacillus cereus group</taxon>
    </lineage>
</organism>
<comment type="function">
    <text evidence="1">Catalyzes the decarboxylative condensation of pimeloyl-[acyl-carrier protein] and L-alanine to produce 8-amino-7-oxononanoate (AON), [acyl-carrier protein], and carbon dioxide.</text>
</comment>
<comment type="catalytic activity">
    <reaction>
        <text>6-carboxyhexanoyl-[ACP] + L-alanine + H(+) = (8S)-8-amino-7-oxononanoate + holo-[ACP] + CO2</text>
        <dbReference type="Rhea" id="RHEA:42288"/>
        <dbReference type="Rhea" id="RHEA-COMP:9685"/>
        <dbReference type="Rhea" id="RHEA-COMP:9955"/>
        <dbReference type="ChEBI" id="CHEBI:15378"/>
        <dbReference type="ChEBI" id="CHEBI:16526"/>
        <dbReference type="ChEBI" id="CHEBI:57972"/>
        <dbReference type="ChEBI" id="CHEBI:64479"/>
        <dbReference type="ChEBI" id="CHEBI:78846"/>
        <dbReference type="ChEBI" id="CHEBI:149468"/>
        <dbReference type="EC" id="2.3.1.47"/>
    </reaction>
</comment>
<comment type="cofactor">
    <cofactor evidence="1">
        <name>pyridoxal 5'-phosphate</name>
        <dbReference type="ChEBI" id="CHEBI:597326"/>
    </cofactor>
</comment>
<comment type="pathway">
    <text>Cofactor biosynthesis; biotin biosynthesis.</text>
</comment>
<comment type="subunit">
    <text evidence="1">Homodimer.</text>
</comment>
<comment type="similarity">
    <text evidence="2">Belongs to the class-II pyridoxal-phosphate-dependent aminotransferase family. BioF subfamily.</text>
</comment>
<proteinExistence type="inferred from homology"/>
<sequence>MNQTWRAHLQSKLQQLHKQGQYRNLYVTEQAEETWLIRDKKRMLNLASNNYLGLAGDERLKEAAIACTKRYGTGATASRLVVGNHPLYEEVERSICDWKGTERALIVNSGYTANIGAISSLASRHDIVFSDKLNHASIVDGIILSGAEHKRYRHNDLDHLEKLLKMASPEKRKLIVTDTVFSMDGDTAYLRDLVQLKEKYGAIIIVDEAHASGIYGIGGAGLSHIEKNLSQKIDIHMGTFSKALGCYGAYLTGDEIYIEYLQNMMRSFIFTTALPPSTLGAVQKAIEIVKEDNERRENLIANGEYFRTKLRDAGFDIGNSSTHIVPIVVGSNEHALRFSKRLQEAGIAAIAIRPPTVPVHSSRIRFAVTSQHTIADLKWAIDRIIHIAKEEEIFV</sequence>
<protein>
    <recommendedName>
        <fullName>Putative 8-amino-7-oxononanoate synthase</fullName>
        <shortName>AONS</shortName>
        <ecNumber>2.3.1.47</ecNumber>
    </recommendedName>
    <alternativeName>
        <fullName>7-keto-8-amino-pelargonic acid synthase</fullName>
        <shortName>7-KAP synthase</shortName>
    </alternativeName>
    <alternativeName>
        <fullName>8-amino-7-ketopelargonate synthase</fullName>
    </alternativeName>
</protein>
<reference key="1">
    <citation type="submission" date="2008-10" db="EMBL/GenBank/DDBJ databases">
        <title>Genome sequence of Bacillus cereus G9842.</title>
        <authorList>
            <person name="Dodson R.J."/>
            <person name="Durkin A.S."/>
            <person name="Rosovitz M.J."/>
            <person name="Rasko D.A."/>
            <person name="Hoffmaster A."/>
            <person name="Ravel J."/>
            <person name="Sutton G."/>
        </authorList>
    </citation>
    <scope>NUCLEOTIDE SEQUENCE [LARGE SCALE GENOMIC DNA]</scope>
    <source>
        <strain>G9842</strain>
    </source>
</reference>
<keyword id="KW-0093">Biotin biosynthesis</keyword>
<keyword id="KW-0663">Pyridoxal phosphate</keyword>
<keyword id="KW-0808">Transferase</keyword>